<organism>
    <name type="scientific">Mus musculus</name>
    <name type="common">Mouse</name>
    <dbReference type="NCBI Taxonomy" id="10090"/>
    <lineage>
        <taxon>Eukaryota</taxon>
        <taxon>Metazoa</taxon>
        <taxon>Chordata</taxon>
        <taxon>Craniata</taxon>
        <taxon>Vertebrata</taxon>
        <taxon>Euteleostomi</taxon>
        <taxon>Mammalia</taxon>
        <taxon>Eutheria</taxon>
        <taxon>Euarchontoglires</taxon>
        <taxon>Glires</taxon>
        <taxon>Rodentia</taxon>
        <taxon>Myomorpha</taxon>
        <taxon>Muroidea</taxon>
        <taxon>Muridae</taxon>
        <taxon>Murinae</taxon>
        <taxon>Mus</taxon>
        <taxon>Mus</taxon>
    </lineage>
</organism>
<feature type="signal peptide" evidence="1">
    <location>
        <begin position="1"/>
        <end position="24"/>
    </location>
</feature>
<feature type="chain" id="PRO_0000026540" description="Gamma-glutamyl hydrolase">
    <location>
        <begin position="25"/>
        <end position="317"/>
    </location>
</feature>
<feature type="domain" description="Gamma-glutamyl hydrolase" evidence="4">
    <location>
        <begin position="25"/>
        <end position="317"/>
    </location>
</feature>
<feature type="active site" description="Nucleophile" evidence="4">
    <location>
        <position position="133"/>
    </location>
</feature>
<feature type="active site" description="Proton donor" evidence="4">
    <location>
        <position position="243"/>
    </location>
</feature>
<feature type="glycosylation site" description="N-linked (GlcNAc...) (high mannose) asparagine" evidence="5">
    <location>
        <position position="100"/>
    </location>
</feature>
<feature type="glycosylation site" description="N-linked (GlcNAc...) (high mannose) asparagine" evidence="5">
    <location>
        <position position="162"/>
    </location>
</feature>
<feature type="glycosylation site" description="N-linked (GlcNAc...) (high mannose) asparagine" evidence="5">
    <location>
        <position position="188"/>
    </location>
</feature>
<feature type="glycosylation site" description="N-linked (GlcNAc...) asparagine" evidence="3">
    <location>
        <position position="202"/>
    </location>
</feature>
<feature type="glycosylation site" description="N-linked (GlcNAc...) asparagine" evidence="3">
    <location>
        <position position="306"/>
    </location>
</feature>
<feature type="splice variant" id="VSP_005447" description="In isoform II." evidence="6">
    <original>MANLGYLLCLLGLLLC</original>
    <variation>MVRGWRLLGVLMLS</variation>
    <location>
        <begin position="1"/>
        <end position="16"/>
    </location>
</feature>
<feature type="sequence conflict" description="In Ref. 1; AAC70002/AAC70003 and 2; AAD47388." evidence="6" ref="1 2">
    <original>D</original>
    <variation>G</variation>
    <location>
        <position position="125"/>
    </location>
</feature>
<feature type="sequence conflict" description="In Ref. 1; AAC70002/AAC70003 and 2; AAD47388." evidence="6" ref="1 2">
    <original>SR</original>
    <variation>NK</variation>
    <location>
        <begin position="170"/>
        <end position="171"/>
    </location>
</feature>
<feature type="sequence conflict" description="In Ref. 1; AAC70002/AAC70003 and 2; AAD47388." evidence="6" ref="1 2">
    <original>A</original>
    <variation>P</variation>
    <location>
        <position position="248"/>
    </location>
</feature>
<feature type="sequence conflict" description="In Ref. 1; AAC70002/AAC70003 and 2; AAD47388." evidence="6" ref="1 2">
    <original>FN</original>
    <variation>VY</variation>
    <location>
        <begin position="299"/>
        <end position="300"/>
    </location>
</feature>
<comment type="function">
    <text evidence="2">Hydrolyzes the polyglutamate sidechains of pteroylpolyglutamates. Progressively removes gamma-glutamyl residues from pteroylpoly-gamma-glutamate to yield pteroyl-alpha-glutamate (folic acid) and free glutamate. May play an important role in the bioavailability of dietary pteroylpolyglutamates and in the metabolism of pteroylpolyglutamates and antifolates.</text>
</comment>
<comment type="catalytic activity">
    <reaction evidence="2">
        <text>(6S)-5,6,7,8-tetrahydrofolyl-(gamma-L-Glu)(n) + (n-1) H2O = (6S)-5,6,7,8-tetrahydrofolate + (n-1) L-glutamate</text>
        <dbReference type="Rhea" id="RHEA:56784"/>
        <dbReference type="Rhea" id="RHEA-COMP:14738"/>
        <dbReference type="ChEBI" id="CHEBI:15377"/>
        <dbReference type="ChEBI" id="CHEBI:29985"/>
        <dbReference type="ChEBI" id="CHEBI:57453"/>
        <dbReference type="ChEBI" id="CHEBI:141005"/>
        <dbReference type="EC" id="3.4.19.9"/>
    </reaction>
    <physiologicalReaction direction="left-to-right" evidence="2">
        <dbReference type="Rhea" id="RHEA:56785"/>
    </physiologicalReaction>
</comment>
<comment type="subunit">
    <text evidence="2">Homodimer.</text>
</comment>
<comment type="subcellular location">
    <subcellularLocation>
        <location evidence="2">Secreted</location>
        <location evidence="2">Extracellular space</location>
    </subcellularLocation>
    <subcellularLocation>
        <location evidence="2">Lysosome</location>
    </subcellularLocation>
    <subcellularLocation>
        <location evidence="2">Melanosome</location>
    </subcellularLocation>
    <text evidence="2">While its intracellular location is primarily the lysosome, most of the enzyme activity is secreted. Identified by mass spectrometry in melanosome fractions from stage I to stage IV.</text>
</comment>
<comment type="alternative products">
    <event type="alternative splicing"/>
    <isoform>
        <id>Q9Z0L8-1</id>
        <name>I</name>
        <sequence type="displayed"/>
    </isoform>
    <isoform>
        <id>Q9Z0L8-2</id>
        <name>II</name>
        <sequence type="described" ref="VSP_005447"/>
    </isoform>
</comment>
<comment type="tissue specificity">
    <text>Isoform I (more expressed than isoform II in all tissues) is highly expressed in salivary gland, followed by kidney, liver, lung, stomach and uterus, and weakly expressed in small intestine, brain and fetal liver. Also expressed at a lower level in thymus, spleen and skeletal muscle. Also expressed in tumors.</text>
</comment>
<comment type="similarity">
    <text evidence="6">Belongs to the peptidase C26 family.</text>
</comment>
<gene>
    <name type="primary">Ggh</name>
</gene>
<evidence type="ECO:0000250" key="1">
    <source>
        <dbReference type="UniProtKB" id="Q62867"/>
    </source>
</evidence>
<evidence type="ECO:0000250" key="2">
    <source>
        <dbReference type="UniProtKB" id="Q92820"/>
    </source>
</evidence>
<evidence type="ECO:0000255" key="3"/>
<evidence type="ECO:0000255" key="4">
    <source>
        <dbReference type="PROSITE-ProRule" id="PRU00607"/>
    </source>
</evidence>
<evidence type="ECO:0000269" key="5">
    <source>
    </source>
</evidence>
<evidence type="ECO:0000305" key="6"/>
<accession>Q9Z0L8</accession>
<accession>B1AWC1</accession>
<accession>Q9Z0L7</accession>
<reference key="1">
    <citation type="journal article" date="1998" name="Gene">
        <title>Cloning of mouse gamma-glutamyl hydrolase in the form of two cDNA variants with different 5' ends and encoding alternate leader peptide sequences.</title>
        <authorList>
            <person name="Esaki T."/>
            <person name="Roy K."/>
            <person name="Yao R."/>
            <person name="Galivan J."/>
            <person name="Sirotnak F.M."/>
        </authorList>
    </citation>
    <scope>NUCLEOTIDE SEQUENCE [MRNA]</scope>
    <scope>ALTERNATIVE SPLICING</scope>
    <source>
        <strain>129/SvJ</strain>
        <strain>BALB/cJ</strain>
        <tissue>Liver</tissue>
    </source>
</reference>
<reference key="2">
    <citation type="journal article" date="1999" name="Gene">
        <title>Organization and structure of the mouse gamma-glutamyl hydrolase gene and the functional identification of its promoter.</title>
        <authorList>
            <person name="Esaki T."/>
            <person name="Masumoto N."/>
            <person name="Hayes P."/>
            <person name="Chen J."/>
            <person name="Sirotnak F.M."/>
        </authorList>
    </citation>
    <scope>NUCLEOTIDE SEQUENCE [GENOMIC DNA]</scope>
    <source>
        <strain>129/SvJ</strain>
    </source>
</reference>
<reference key="3">
    <citation type="journal article" date="2009" name="PLoS Biol.">
        <title>Lineage-specific biology revealed by a finished genome assembly of the mouse.</title>
        <authorList>
            <person name="Church D.M."/>
            <person name="Goodstadt L."/>
            <person name="Hillier L.W."/>
            <person name="Zody M.C."/>
            <person name="Goldstein S."/>
            <person name="She X."/>
            <person name="Bult C.J."/>
            <person name="Agarwala R."/>
            <person name="Cherry J.L."/>
            <person name="DiCuccio M."/>
            <person name="Hlavina W."/>
            <person name="Kapustin Y."/>
            <person name="Meric P."/>
            <person name="Maglott D."/>
            <person name="Birtle Z."/>
            <person name="Marques A.C."/>
            <person name="Graves T."/>
            <person name="Zhou S."/>
            <person name="Teague B."/>
            <person name="Potamousis K."/>
            <person name="Churas C."/>
            <person name="Place M."/>
            <person name="Herschleb J."/>
            <person name="Runnheim R."/>
            <person name="Forrest D."/>
            <person name="Amos-Landgraf J."/>
            <person name="Schwartz D.C."/>
            <person name="Cheng Z."/>
            <person name="Lindblad-Toh K."/>
            <person name="Eichler E.E."/>
            <person name="Ponting C.P."/>
        </authorList>
    </citation>
    <scope>NUCLEOTIDE SEQUENCE [LARGE SCALE GENOMIC DNA]</scope>
    <source>
        <strain>C57BL/6J</strain>
    </source>
</reference>
<reference key="4">
    <citation type="journal article" date="2005" name="Mol. Cell. Proteomics">
        <title>High throughput quantitative glycomics and glycoform-focused proteomics of murine dermis and epidermis.</title>
        <authorList>
            <person name="Uematsu R."/>
            <person name="Furukawa J."/>
            <person name="Nakagawa H."/>
            <person name="Shinohara Y."/>
            <person name="Deguchi K."/>
            <person name="Monde K."/>
            <person name="Nishimura S."/>
        </authorList>
    </citation>
    <scope>GLYCOSYLATION [LARGE SCALE ANALYSIS] AT ASN-100; ASN-162 AND ASN-188</scope>
    <source>
        <tissue>Epidermis</tissue>
    </source>
</reference>
<reference key="5">
    <citation type="journal article" date="2010" name="Cell">
        <title>A tissue-specific atlas of mouse protein phosphorylation and expression.</title>
        <authorList>
            <person name="Huttlin E.L."/>
            <person name="Jedrychowski M.P."/>
            <person name="Elias J.E."/>
            <person name="Goswami T."/>
            <person name="Rad R."/>
            <person name="Beausoleil S.A."/>
            <person name="Villen J."/>
            <person name="Haas W."/>
            <person name="Sowa M.E."/>
            <person name="Gygi S.P."/>
        </authorList>
    </citation>
    <scope>IDENTIFICATION BY MASS SPECTROMETRY [LARGE SCALE ANALYSIS]</scope>
    <source>
        <tissue>Pancreas</tissue>
    </source>
</reference>
<name>GGH_MOUSE</name>
<dbReference type="EC" id="3.4.19.9" evidence="2"/>
<dbReference type="EMBL" id="AF051102">
    <property type="protein sequence ID" value="AAC70002.1"/>
    <property type="molecule type" value="mRNA"/>
</dbReference>
<dbReference type="EMBL" id="AF051103">
    <property type="protein sequence ID" value="AAC70003.1"/>
    <property type="molecule type" value="mRNA"/>
</dbReference>
<dbReference type="EMBL" id="AF090732">
    <property type="protein sequence ID" value="AAD47388.1"/>
    <property type="molecule type" value="Genomic_DNA"/>
</dbReference>
<dbReference type="EMBL" id="AF090725">
    <property type="protein sequence ID" value="AAD47388.1"/>
    <property type="status" value="JOINED"/>
    <property type="molecule type" value="Genomic_DNA"/>
</dbReference>
<dbReference type="EMBL" id="AF090726">
    <property type="protein sequence ID" value="AAD47388.1"/>
    <property type="status" value="JOINED"/>
    <property type="molecule type" value="Genomic_DNA"/>
</dbReference>
<dbReference type="EMBL" id="AF090727">
    <property type="protein sequence ID" value="AAD47388.1"/>
    <property type="status" value="JOINED"/>
    <property type="molecule type" value="Genomic_DNA"/>
</dbReference>
<dbReference type="EMBL" id="AF090728">
    <property type="protein sequence ID" value="AAD47388.1"/>
    <property type="status" value="JOINED"/>
    <property type="molecule type" value="Genomic_DNA"/>
</dbReference>
<dbReference type="EMBL" id="AF090729">
    <property type="protein sequence ID" value="AAD47388.1"/>
    <property type="status" value="JOINED"/>
    <property type="molecule type" value="Genomic_DNA"/>
</dbReference>
<dbReference type="EMBL" id="AF090730">
    <property type="protein sequence ID" value="AAD47388.1"/>
    <property type="status" value="JOINED"/>
    <property type="molecule type" value="Genomic_DNA"/>
</dbReference>
<dbReference type="EMBL" id="AF090731">
    <property type="protein sequence ID" value="AAD47388.1"/>
    <property type="status" value="JOINED"/>
    <property type="molecule type" value="Genomic_DNA"/>
</dbReference>
<dbReference type="EMBL" id="AL732527">
    <property type="status" value="NOT_ANNOTATED_CDS"/>
    <property type="molecule type" value="Genomic_DNA"/>
</dbReference>
<dbReference type="EMBL" id="CR931798">
    <property type="status" value="NOT_ANNOTATED_CDS"/>
    <property type="molecule type" value="Genomic_DNA"/>
</dbReference>
<dbReference type="CCDS" id="CCDS51126.1">
    <molecule id="Q9Z0L8-1"/>
</dbReference>
<dbReference type="RefSeq" id="NP_034411.2">
    <molecule id="Q9Z0L8-1"/>
    <property type="nucleotide sequence ID" value="NM_010281.2"/>
</dbReference>
<dbReference type="SMR" id="Q9Z0L8"/>
<dbReference type="BioGRID" id="199908">
    <property type="interactions" value="3"/>
</dbReference>
<dbReference type="FunCoup" id="Q9Z0L8">
    <property type="interactions" value="450"/>
</dbReference>
<dbReference type="STRING" id="10090.ENSMUSP00000095843"/>
<dbReference type="MEROPS" id="C26.001"/>
<dbReference type="GlyConnect" id="2330">
    <property type="glycosylation" value="4 N-Linked glycans (2 sites)"/>
</dbReference>
<dbReference type="GlyCosmos" id="Q9Z0L8">
    <property type="glycosylation" value="5 sites, 4 glycans"/>
</dbReference>
<dbReference type="GlyGen" id="Q9Z0L8">
    <property type="glycosylation" value="5 sites, 6 N-linked glycans (4 sites)"/>
</dbReference>
<dbReference type="iPTMnet" id="Q9Z0L8"/>
<dbReference type="PhosphoSitePlus" id="Q9Z0L8"/>
<dbReference type="CPTAC" id="non-CPTAC-3352"/>
<dbReference type="CPTAC" id="non-CPTAC-3353"/>
<dbReference type="PaxDb" id="10090-ENSMUSP00000095843"/>
<dbReference type="ProteomicsDB" id="266800">
    <molecule id="Q9Z0L8-1"/>
</dbReference>
<dbReference type="ProteomicsDB" id="266801">
    <molecule id="Q9Z0L8-2"/>
</dbReference>
<dbReference type="Pumba" id="Q9Z0L8"/>
<dbReference type="Antibodypedia" id="4517">
    <property type="antibodies" value="317 antibodies from 31 providers"/>
</dbReference>
<dbReference type="DNASU" id="14590"/>
<dbReference type="Ensembl" id="ENSMUST00000098242.4">
    <molecule id="Q9Z0L8-1"/>
    <property type="protein sequence ID" value="ENSMUSP00000095843.4"/>
    <property type="gene ID" value="ENSMUSG00000073987.5"/>
</dbReference>
<dbReference type="GeneID" id="14590"/>
<dbReference type="KEGG" id="mmu:14590"/>
<dbReference type="UCSC" id="uc008sck.1">
    <molecule id="Q9Z0L8-1"/>
    <property type="organism name" value="mouse"/>
</dbReference>
<dbReference type="AGR" id="MGI:1329035"/>
<dbReference type="CTD" id="8836"/>
<dbReference type="MGI" id="MGI:1329035">
    <property type="gene designation" value="Ggh"/>
</dbReference>
<dbReference type="VEuPathDB" id="HostDB:ENSMUSG00000073987"/>
<dbReference type="eggNOG" id="KOG1559">
    <property type="taxonomic scope" value="Eukaryota"/>
</dbReference>
<dbReference type="GeneTree" id="ENSGT00490000043388"/>
<dbReference type="HOGENOM" id="CLU_058704_1_1_1"/>
<dbReference type="InParanoid" id="Q9Z0L8"/>
<dbReference type="OMA" id="CHEDIDH"/>
<dbReference type="OrthoDB" id="64220at2759"/>
<dbReference type="PhylomeDB" id="Q9Z0L8"/>
<dbReference type="TreeFam" id="TF323437"/>
<dbReference type="Reactome" id="R-MMU-6798695">
    <property type="pathway name" value="Neutrophil degranulation"/>
</dbReference>
<dbReference type="BioGRID-ORCS" id="14590">
    <property type="hits" value="1 hit in 79 CRISPR screens"/>
</dbReference>
<dbReference type="ChiTaRS" id="Ggh">
    <property type="organism name" value="mouse"/>
</dbReference>
<dbReference type="PRO" id="PR:Q9Z0L8"/>
<dbReference type="Proteomes" id="UP000000589">
    <property type="component" value="Chromosome 4"/>
</dbReference>
<dbReference type="RNAct" id="Q9Z0L8">
    <property type="molecule type" value="protein"/>
</dbReference>
<dbReference type="Bgee" id="ENSMUSG00000073987">
    <property type="expression patterns" value="Expressed in parotid gland and 250 other cell types or tissues"/>
</dbReference>
<dbReference type="GO" id="GO:0005615">
    <property type="term" value="C:extracellular space"/>
    <property type="evidence" value="ECO:0007005"/>
    <property type="project" value="BHF-UCL"/>
</dbReference>
<dbReference type="GO" id="GO:0005764">
    <property type="term" value="C:lysosome"/>
    <property type="evidence" value="ECO:0000304"/>
    <property type="project" value="MGI"/>
</dbReference>
<dbReference type="GO" id="GO:0042470">
    <property type="term" value="C:melanosome"/>
    <property type="evidence" value="ECO:0007669"/>
    <property type="project" value="UniProtKB-SubCell"/>
</dbReference>
<dbReference type="GO" id="GO:0034722">
    <property type="term" value="F:gamma-glutamyl-peptidase activity"/>
    <property type="evidence" value="ECO:0000250"/>
    <property type="project" value="UniProtKB"/>
</dbReference>
<dbReference type="FunFam" id="3.40.50.880:FF:000024">
    <property type="entry name" value="Folate gamma-glutamyl hydrolase"/>
    <property type="match status" value="1"/>
</dbReference>
<dbReference type="Gene3D" id="3.40.50.880">
    <property type="match status" value="1"/>
</dbReference>
<dbReference type="InterPro" id="IPR029062">
    <property type="entry name" value="Class_I_gatase-like"/>
</dbReference>
<dbReference type="InterPro" id="IPR015527">
    <property type="entry name" value="Pept_C26_g-glut_hydrolase"/>
</dbReference>
<dbReference type="InterPro" id="IPR011697">
    <property type="entry name" value="Peptidase_C26"/>
</dbReference>
<dbReference type="PANTHER" id="PTHR11315:SF20">
    <property type="entry name" value="GAMMA-GLUTAMYL HYDROLASE"/>
    <property type="match status" value="1"/>
</dbReference>
<dbReference type="PANTHER" id="PTHR11315">
    <property type="entry name" value="PROTEASE FAMILY C26 GAMMA-GLUTAMYL HYDROLASE"/>
    <property type="match status" value="1"/>
</dbReference>
<dbReference type="Pfam" id="PF07722">
    <property type="entry name" value="Peptidase_C26"/>
    <property type="match status" value="1"/>
</dbReference>
<dbReference type="SUPFAM" id="SSF52317">
    <property type="entry name" value="Class I glutamine amidotransferase-like"/>
    <property type="match status" value="1"/>
</dbReference>
<dbReference type="PROSITE" id="PS51275">
    <property type="entry name" value="PEPTIDASE_C26_GGH"/>
    <property type="match status" value="1"/>
</dbReference>
<keyword id="KW-0025">Alternative splicing</keyword>
<keyword id="KW-0325">Glycoprotein</keyword>
<keyword id="KW-0378">Hydrolase</keyword>
<keyword id="KW-0458">Lysosome</keyword>
<keyword id="KW-1185">Reference proteome</keyword>
<keyword id="KW-0964">Secreted</keyword>
<keyword id="KW-0732">Signal</keyword>
<sequence length="317" mass="35470">MANLGYLLCLLGLLLCGLSSPGMSRPYNHGSERPIIGVVMQECFGKMAKLGNYYIAASYVKYIESAGARVVPIRPDLSDAEYEELFRSINGVLLPGGGANLTDSGYSRVAKIFFSKALESFDNGDHFPVWGTCLGFEELSVLVSGENLLTSTDTKSKKLPLNFTEGARKSRMFKHFPTELLDSLALENLTANFHKWSLSVKNFTENEKLKKFFNILTTNTDGKTEFISSMEGFKYPVYAVQWHPEKAAFEWKNLGGISHAPNAVKTSFYLAEFLVSEARKNSHHFENVVKETASLIYKFNPIYTGNISSFQQAYMFD</sequence>
<proteinExistence type="evidence at protein level"/>
<protein>
    <recommendedName>
        <fullName>Gamma-glutamyl hydrolase</fullName>
        <ecNumber evidence="2">3.4.19.9</ecNumber>
    </recommendedName>
    <alternativeName>
        <fullName>Conjugase</fullName>
    </alternativeName>
    <alternativeName>
        <fullName>FGPH</fullName>
    </alternativeName>
    <alternativeName>
        <fullName>Folylpolyglutamate hydrolase</fullName>
    </alternativeName>
    <alternativeName>
        <fullName>GH</fullName>
    </alternativeName>
    <alternativeName>
        <fullName>Gamma-Glu-x carboxypeptidase</fullName>
    </alternativeName>
</protein>